<comment type="subcellular location">
    <subcellularLocation>
        <location evidence="1">Membrane</location>
        <topology evidence="1">Multi-pass membrane protein</topology>
    </subcellularLocation>
</comment>
<comment type="alternative products">
    <event type="alternative splicing"/>
    <isoform>
        <id>Q6AWX0-1</id>
        <name>1</name>
        <sequence type="displayed"/>
    </isoform>
    <text>A number of isoforms are produced. According to EST sequences.</text>
</comment>
<comment type="similarity">
    <text evidence="4">Belongs to the major facilitator superfamily. Sugar transporter (TC 2.A.1.1) family.</text>
</comment>
<comment type="sequence caution" evidence="4">
    <conflict type="erroneous gene model prediction">
        <sequence resource="EMBL-CDS" id="CAC01714"/>
    </conflict>
</comment>
<sequence length="503" mass="53538">MALDPEQQQPISSVSREFGKSSGEISPEREPLIKENHVPENYSVVAAILPFLFPALGGLLYGYEIGATSCATISLQSPSLSGISWYNLSSVDVGLVTSGSLYGALFGSIVAFTIADVIGRRKELILAALLYLVGALVTALAPTYSVLIIGRVIYGVSVGLAMHAAPMYIAETAPSPIRGQLVSLKEFFIVLGMVGGYGIGSLTVNVHSGWRYMYATSVPLAVIMGIGMWWLPASPRWLLLRVIQGKGNVENQREAAIKSLCCLRGPAFVDSAAEQVNEILAELTFVGEDKEVTFGELFQGKCLKALIIGGGLVLFQQITGQPSVLYYAPSILQTAGFSAAGDATRVSILLGLLKLIMTGVAVVVIDRLGRRPLLLGGVGGMVVSLFLLGSYYLFFSASPVVAVVALLLYVGCYQLSFGPIGWLMISEIFPLKLRGRGLSLAVLVNFGANALVTFAFSPLKELLGAGILFCGFGVICVLSLVFIFFIVPETKGLTLEEIEAKCL</sequence>
<evidence type="ECO:0000250" key="1"/>
<evidence type="ECO:0000255" key="2"/>
<evidence type="ECO:0000256" key="3">
    <source>
        <dbReference type="SAM" id="MobiDB-lite"/>
    </source>
</evidence>
<evidence type="ECO:0000305" key="4"/>
<evidence type="ECO:0007744" key="5">
    <source>
    </source>
</evidence>
<evidence type="ECO:0007744" key="6">
    <source>
    </source>
</evidence>
<organism>
    <name type="scientific">Arabidopsis thaliana</name>
    <name type="common">Mouse-ear cress</name>
    <dbReference type="NCBI Taxonomy" id="3702"/>
    <lineage>
        <taxon>Eukaryota</taxon>
        <taxon>Viridiplantae</taxon>
        <taxon>Streptophyta</taxon>
        <taxon>Embryophyta</taxon>
        <taxon>Tracheophyta</taxon>
        <taxon>Spermatophyta</taxon>
        <taxon>Magnoliopsida</taxon>
        <taxon>eudicotyledons</taxon>
        <taxon>Gunneridae</taxon>
        <taxon>Pentapetalae</taxon>
        <taxon>rosids</taxon>
        <taxon>malvids</taxon>
        <taxon>Brassicales</taxon>
        <taxon>Brassicaceae</taxon>
        <taxon>Camelineae</taxon>
        <taxon>Arabidopsis</taxon>
    </lineage>
</organism>
<protein>
    <recommendedName>
        <fullName>D-xylose-proton symporter-like 2</fullName>
    </recommendedName>
</protein>
<gene>
    <name type="ordered locus">At5g17010</name>
    <name type="ORF">F2K13.160</name>
</gene>
<proteinExistence type="evidence at protein level"/>
<accession>Q6AWX0</accession>
<accession>F4KFK8</accession>
<accession>Q9LFK1</accession>
<keyword id="KW-0007">Acetylation</keyword>
<keyword id="KW-0025">Alternative splicing</keyword>
<keyword id="KW-0472">Membrane</keyword>
<keyword id="KW-0597">Phosphoprotein</keyword>
<keyword id="KW-1185">Reference proteome</keyword>
<keyword id="KW-0762">Sugar transport</keyword>
<keyword id="KW-0812">Transmembrane</keyword>
<keyword id="KW-1133">Transmembrane helix</keyword>
<keyword id="KW-0813">Transport</keyword>
<feature type="initiator methionine" description="Removed" evidence="6">
    <location>
        <position position="1"/>
    </location>
</feature>
<feature type="chain" id="PRO_0000259880" description="D-xylose-proton symporter-like 2">
    <location>
        <begin position="2"/>
        <end position="503"/>
    </location>
</feature>
<feature type="transmembrane region" description="Helical; Name=1" evidence="2">
    <location>
        <begin position="42"/>
        <end position="62"/>
    </location>
</feature>
<feature type="transmembrane region" description="Helical; Name=2" evidence="2">
    <location>
        <begin position="99"/>
        <end position="119"/>
    </location>
</feature>
<feature type="transmembrane region" description="Helical; Name=3" evidence="2">
    <location>
        <begin position="124"/>
        <end position="144"/>
    </location>
</feature>
<feature type="transmembrane region" description="Helical; Name=4" evidence="2">
    <location>
        <begin position="146"/>
        <end position="166"/>
    </location>
</feature>
<feature type="transmembrane region" description="Helical; Name=5" evidence="2">
    <location>
        <begin position="187"/>
        <end position="207"/>
    </location>
</feature>
<feature type="transmembrane region" description="Helical; Name=6" evidence="2">
    <location>
        <begin position="213"/>
        <end position="233"/>
    </location>
</feature>
<feature type="transmembrane region" description="Helical; Name=7" evidence="2">
    <location>
        <begin position="305"/>
        <end position="325"/>
    </location>
</feature>
<feature type="transmembrane region" description="Helical; Name=8" evidence="2">
    <location>
        <begin position="346"/>
        <end position="366"/>
    </location>
</feature>
<feature type="transmembrane region" description="Helical; Name=9" evidence="2">
    <location>
        <begin position="375"/>
        <end position="395"/>
    </location>
</feature>
<feature type="transmembrane region" description="Helical; Name=10" evidence="2">
    <location>
        <begin position="400"/>
        <end position="420"/>
    </location>
</feature>
<feature type="transmembrane region" description="Helical; Name=11" evidence="2">
    <location>
        <begin position="437"/>
        <end position="457"/>
    </location>
</feature>
<feature type="transmembrane region" description="Helical; Name=12" evidence="2">
    <location>
        <begin position="467"/>
        <end position="487"/>
    </location>
</feature>
<feature type="region of interest" description="Disordered" evidence="3">
    <location>
        <begin position="1"/>
        <end position="32"/>
    </location>
</feature>
<feature type="compositionally biased region" description="Polar residues" evidence="3">
    <location>
        <begin position="1"/>
        <end position="15"/>
    </location>
</feature>
<feature type="modified residue" description="N-acetylalanine" evidence="6">
    <location>
        <position position="2"/>
    </location>
</feature>
<feature type="modified residue" description="Phosphoserine" evidence="5">
    <location>
        <position position="26"/>
    </location>
</feature>
<dbReference type="EMBL" id="AL391141">
    <property type="protein sequence ID" value="CAC01714.1"/>
    <property type="status" value="ALT_SEQ"/>
    <property type="molecule type" value="Genomic_DNA"/>
</dbReference>
<dbReference type="EMBL" id="CP002688">
    <property type="protein sequence ID" value="AED92369.1"/>
    <property type="molecule type" value="Genomic_DNA"/>
</dbReference>
<dbReference type="EMBL" id="CP002688">
    <property type="protein sequence ID" value="AED92370.1"/>
    <property type="molecule type" value="Genomic_DNA"/>
</dbReference>
<dbReference type="EMBL" id="CP002688">
    <property type="protein sequence ID" value="AED92372.2"/>
    <property type="molecule type" value="Genomic_DNA"/>
</dbReference>
<dbReference type="EMBL" id="BT015128">
    <property type="protein sequence ID" value="AAT85724.1"/>
    <property type="molecule type" value="mRNA"/>
</dbReference>
<dbReference type="EMBL" id="AK228392">
    <property type="protein sequence ID" value="BAF00329.1"/>
    <property type="molecule type" value="mRNA"/>
</dbReference>
<dbReference type="PIR" id="T51556">
    <property type="entry name" value="T51556"/>
</dbReference>
<dbReference type="RefSeq" id="NP_001318578.1">
    <molecule id="Q6AWX0-1"/>
    <property type="nucleotide sequence ID" value="NM_001343477.1"/>
</dbReference>
<dbReference type="RefSeq" id="NP_197203.1">
    <property type="nucleotide sequence ID" value="NM_121707.3"/>
</dbReference>
<dbReference type="RefSeq" id="NP_850835.2">
    <molecule id="Q6AWX0-1"/>
    <property type="nucleotide sequence ID" value="NM_180504.3"/>
</dbReference>
<dbReference type="RefSeq" id="NP_850836.2">
    <molecule id="Q6AWX0-1"/>
    <property type="nucleotide sequence ID" value="NM_180505.3"/>
</dbReference>
<dbReference type="SMR" id="Q6AWX0"/>
<dbReference type="BioGRID" id="16840">
    <property type="interactions" value="12"/>
</dbReference>
<dbReference type="FunCoup" id="Q6AWX0">
    <property type="interactions" value="191"/>
</dbReference>
<dbReference type="IntAct" id="Q6AWX0">
    <property type="interactions" value="12"/>
</dbReference>
<dbReference type="STRING" id="3702.Q6AWX0"/>
<dbReference type="iPTMnet" id="Q6AWX0"/>
<dbReference type="PaxDb" id="3702-AT5G17010.1"/>
<dbReference type="ProteomicsDB" id="242458">
    <molecule id="Q6AWX0-1"/>
</dbReference>
<dbReference type="EnsemblPlants" id="AT5G17010.1">
    <molecule id="Q6AWX0-1"/>
    <property type="protein sequence ID" value="AT5G17010.1"/>
    <property type="gene ID" value="AT5G17010"/>
</dbReference>
<dbReference type="EnsemblPlants" id="AT5G17010.3">
    <molecule id="Q6AWX0-1"/>
    <property type="protein sequence ID" value="AT5G17010.3"/>
    <property type="gene ID" value="AT5G17010"/>
</dbReference>
<dbReference type="EnsemblPlants" id="AT5G17010.4">
    <molecule id="Q6AWX0-1"/>
    <property type="protein sequence ID" value="AT5G17010.4"/>
    <property type="gene ID" value="AT5G17010"/>
</dbReference>
<dbReference type="GeneID" id="831564"/>
<dbReference type="Gramene" id="AT5G17010.1">
    <molecule id="Q6AWX0-1"/>
    <property type="protein sequence ID" value="AT5G17010.1"/>
    <property type="gene ID" value="AT5G17010"/>
</dbReference>
<dbReference type="Gramene" id="AT5G17010.3">
    <molecule id="Q6AWX0-1"/>
    <property type="protein sequence ID" value="AT5G17010.3"/>
    <property type="gene ID" value="AT5G17010"/>
</dbReference>
<dbReference type="Gramene" id="AT5G17010.4">
    <molecule id="Q6AWX0-1"/>
    <property type="protein sequence ID" value="AT5G17010.4"/>
    <property type="gene ID" value="AT5G17010"/>
</dbReference>
<dbReference type="KEGG" id="ath:AT5G17010"/>
<dbReference type="Araport" id="AT5G17010"/>
<dbReference type="TAIR" id="AT5G17010"/>
<dbReference type="eggNOG" id="KOG0254">
    <property type="taxonomic scope" value="Eukaryota"/>
</dbReference>
<dbReference type="InParanoid" id="Q6AWX0"/>
<dbReference type="OMA" id="HMGEYDP"/>
<dbReference type="PhylomeDB" id="Q6AWX0"/>
<dbReference type="PRO" id="PR:Q6AWX0"/>
<dbReference type="Proteomes" id="UP000006548">
    <property type="component" value="Chromosome 5"/>
</dbReference>
<dbReference type="ExpressionAtlas" id="Q6AWX0">
    <property type="expression patterns" value="baseline and differential"/>
</dbReference>
<dbReference type="GO" id="GO:0016020">
    <property type="term" value="C:membrane"/>
    <property type="evidence" value="ECO:0007669"/>
    <property type="project" value="UniProtKB-SubCell"/>
</dbReference>
<dbReference type="GO" id="GO:0000325">
    <property type="term" value="C:plant-type vacuole"/>
    <property type="evidence" value="ECO:0007005"/>
    <property type="project" value="TAIR"/>
</dbReference>
<dbReference type="GO" id="GO:0009536">
    <property type="term" value="C:plastid"/>
    <property type="evidence" value="ECO:0007005"/>
    <property type="project" value="TAIR"/>
</dbReference>
<dbReference type="GO" id="GO:0022857">
    <property type="term" value="F:transmembrane transporter activity"/>
    <property type="evidence" value="ECO:0007669"/>
    <property type="project" value="InterPro"/>
</dbReference>
<dbReference type="CDD" id="cd17362">
    <property type="entry name" value="MFS_GLUT10_12_Class3_like"/>
    <property type="match status" value="1"/>
</dbReference>
<dbReference type="FunFam" id="1.20.1250.20:FF:000118">
    <property type="entry name" value="D-xylose-proton symporter-like 3, chloroplastic"/>
    <property type="match status" value="1"/>
</dbReference>
<dbReference type="Gene3D" id="1.20.1250.20">
    <property type="entry name" value="MFS general substrate transporter like domains"/>
    <property type="match status" value="1"/>
</dbReference>
<dbReference type="InterPro" id="IPR020846">
    <property type="entry name" value="MFS_dom"/>
</dbReference>
<dbReference type="InterPro" id="IPR005828">
    <property type="entry name" value="MFS_sugar_transport-like"/>
</dbReference>
<dbReference type="InterPro" id="IPR050820">
    <property type="entry name" value="MFS_Sugar_Transporter"/>
</dbReference>
<dbReference type="InterPro" id="IPR036259">
    <property type="entry name" value="MFS_trans_sf"/>
</dbReference>
<dbReference type="InterPro" id="IPR003663">
    <property type="entry name" value="Sugar/inositol_transpt"/>
</dbReference>
<dbReference type="InterPro" id="IPR005829">
    <property type="entry name" value="Sugar_transporter_CS"/>
</dbReference>
<dbReference type="NCBIfam" id="TIGR00879">
    <property type="entry name" value="SP"/>
    <property type="match status" value="1"/>
</dbReference>
<dbReference type="PANTHER" id="PTHR48023">
    <property type="entry name" value="D-XYLOSE-PROTON SYMPORTER-LIKE 2"/>
    <property type="match status" value="1"/>
</dbReference>
<dbReference type="PANTHER" id="PTHR48023:SF4">
    <property type="entry name" value="D-XYLOSE-PROTON SYMPORTER-LIKE 2"/>
    <property type="match status" value="1"/>
</dbReference>
<dbReference type="Pfam" id="PF00083">
    <property type="entry name" value="Sugar_tr"/>
    <property type="match status" value="1"/>
</dbReference>
<dbReference type="PRINTS" id="PR00171">
    <property type="entry name" value="SUGRTRNSPORT"/>
</dbReference>
<dbReference type="SUPFAM" id="SSF103473">
    <property type="entry name" value="MFS general substrate transporter"/>
    <property type="match status" value="1"/>
</dbReference>
<dbReference type="PROSITE" id="PS50850">
    <property type="entry name" value="MFS"/>
    <property type="match status" value="1"/>
</dbReference>
<dbReference type="PROSITE" id="PS00216">
    <property type="entry name" value="SUGAR_TRANSPORT_1"/>
    <property type="match status" value="2"/>
</dbReference>
<dbReference type="PROSITE" id="PS00217">
    <property type="entry name" value="SUGAR_TRANSPORT_2"/>
    <property type="match status" value="1"/>
</dbReference>
<reference key="1">
    <citation type="journal article" date="2000" name="Nature">
        <title>Sequence and analysis of chromosome 5 of the plant Arabidopsis thaliana.</title>
        <authorList>
            <person name="Tabata S."/>
            <person name="Kaneko T."/>
            <person name="Nakamura Y."/>
            <person name="Kotani H."/>
            <person name="Kato T."/>
            <person name="Asamizu E."/>
            <person name="Miyajima N."/>
            <person name="Sasamoto S."/>
            <person name="Kimura T."/>
            <person name="Hosouchi T."/>
            <person name="Kawashima K."/>
            <person name="Kohara M."/>
            <person name="Matsumoto M."/>
            <person name="Matsuno A."/>
            <person name="Muraki A."/>
            <person name="Nakayama S."/>
            <person name="Nakazaki N."/>
            <person name="Naruo K."/>
            <person name="Okumura S."/>
            <person name="Shinpo S."/>
            <person name="Takeuchi C."/>
            <person name="Wada T."/>
            <person name="Watanabe A."/>
            <person name="Yamada M."/>
            <person name="Yasuda M."/>
            <person name="Sato S."/>
            <person name="de la Bastide M."/>
            <person name="Huang E."/>
            <person name="Spiegel L."/>
            <person name="Gnoj L."/>
            <person name="O'Shaughnessy A."/>
            <person name="Preston R."/>
            <person name="Habermann K."/>
            <person name="Murray J."/>
            <person name="Johnson D."/>
            <person name="Rohlfing T."/>
            <person name="Nelson J."/>
            <person name="Stoneking T."/>
            <person name="Pepin K."/>
            <person name="Spieth J."/>
            <person name="Sekhon M."/>
            <person name="Armstrong J."/>
            <person name="Becker M."/>
            <person name="Belter E."/>
            <person name="Cordum H."/>
            <person name="Cordes M."/>
            <person name="Courtney L."/>
            <person name="Courtney W."/>
            <person name="Dante M."/>
            <person name="Du H."/>
            <person name="Edwards J."/>
            <person name="Fryman J."/>
            <person name="Haakensen B."/>
            <person name="Lamar E."/>
            <person name="Latreille P."/>
            <person name="Leonard S."/>
            <person name="Meyer R."/>
            <person name="Mulvaney E."/>
            <person name="Ozersky P."/>
            <person name="Riley A."/>
            <person name="Strowmatt C."/>
            <person name="Wagner-McPherson C."/>
            <person name="Wollam A."/>
            <person name="Yoakum M."/>
            <person name="Bell M."/>
            <person name="Dedhia N."/>
            <person name="Parnell L."/>
            <person name="Shah R."/>
            <person name="Rodriguez M."/>
            <person name="Hoon See L."/>
            <person name="Vil D."/>
            <person name="Baker J."/>
            <person name="Kirchoff K."/>
            <person name="Toth K."/>
            <person name="King L."/>
            <person name="Bahret A."/>
            <person name="Miller B."/>
            <person name="Marra M.A."/>
            <person name="Martienssen R."/>
            <person name="McCombie W.R."/>
            <person name="Wilson R.K."/>
            <person name="Murphy G."/>
            <person name="Bancroft I."/>
            <person name="Volckaert G."/>
            <person name="Wambutt R."/>
            <person name="Duesterhoeft A."/>
            <person name="Stiekema W."/>
            <person name="Pohl T."/>
            <person name="Entian K.-D."/>
            <person name="Terryn N."/>
            <person name="Hartley N."/>
            <person name="Bent E."/>
            <person name="Johnson S."/>
            <person name="Langham S.-A."/>
            <person name="McCullagh B."/>
            <person name="Robben J."/>
            <person name="Grymonprez B."/>
            <person name="Zimmermann W."/>
            <person name="Ramsperger U."/>
            <person name="Wedler H."/>
            <person name="Balke K."/>
            <person name="Wedler E."/>
            <person name="Peters S."/>
            <person name="van Staveren M."/>
            <person name="Dirkse W."/>
            <person name="Mooijman P."/>
            <person name="Klein Lankhorst R."/>
            <person name="Weitzenegger T."/>
            <person name="Bothe G."/>
            <person name="Rose M."/>
            <person name="Hauf J."/>
            <person name="Berneiser S."/>
            <person name="Hempel S."/>
            <person name="Feldpausch M."/>
            <person name="Lamberth S."/>
            <person name="Villarroel R."/>
            <person name="Gielen J."/>
            <person name="Ardiles W."/>
            <person name="Bents O."/>
            <person name="Lemcke K."/>
            <person name="Kolesov G."/>
            <person name="Mayer K.F.X."/>
            <person name="Rudd S."/>
            <person name="Schoof H."/>
            <person name="Schueller C."/>
            <person name="Zaccaria P."/>
            <person name="Mewes H.-W."/>
            <person name="Bevan M."/>
            <person name="Fransz P.F."/>
        </authorList>
    </citation>
    <scope>NUCLEOTIDE SEQUENCE [LARGE SCALE GENOMIC DNA]</scope>
    <source>
        <strain>cv. Columbia</strain>
    </source>
</reference>
<reference key="2">
    <citation type="journal article" date="2017" name="Plant J.">
        <title>Araport11: a complete reannotation of the Arabidopsis thaliana reference genome.</title>
        <authorList>
            <person name="Cheng C.Y."/>
            <person name="Krishnakumar V."/>
            <person name="Chan A.P."/>
            <person name="Thibaud-Nissen F."/>
            <person name="Schobel S."/>
            <person name="Town C.D."/>
        </authorList>
    </citation>
    <scope>GENOME REANNOTATION</scope>
    <source>
        <strain>cv. Columbia</strain>
    </source>
</reference>
<reference key="3">
    <citation type="submission" date="2004-08" db="EMBL/GenBank/DDBJ databases">
        <title>Arabidopsis ORF clones.</title>
        <authorList>
            <person name="Cheuk R.F."/>
            <person name="Chen H."/>
            <person name="Kim C.J."/>
            <person name="Shinn P."/>
            <person name="Ecker J.R."/>
        </authorList>
    </citation>
    <scope>NUCLEOTIDE SEQUENCE [LARGE SCALE MRNA]</scope>
    <source>
        <strain>cv. Columbia</strain>
    </source>
</reference>
<reference key="4">
    <citation type="submission" date="2006-07" db="EMBL/GenBank/DDBJ databases">
        <title>Large-scale analysis of RIKEN Arabidopsis full-length (RAFL) cDNAs.</title>
        <authorList>
            <person name="Totoki Y."/>
            <person name="Seki M."/>
            <person name="Ishida J."/>
            <person name="Nakajima M."/>
            <person name="Enju A."/>
            <person name="Kamiya A."/>
            <person name="Narusaka M."/>
            <person name="Shin-i T."/>
            <person name="Nakagawa M."/>
            <person name="Sakamoto N."/>
            <person name="Oishi K."/>
            <person name="Kohara Y."/>
            <person name="Kobayashi M."/>
            <person name="Toyoda A."/>
            <person name="Sakaki Y."/>
            <person name="Sakurai T."/>
            <person name="Iida K."/>
            <person name="Akiyama K."/>
            <person name="Satou M."/>
            <person name="Toyoda T."/>
            <person name="Konagaya A."/>
            <person name="Carninci P."/>
            <person name="Kawai J."/>
            <person name="Hayashizaki Y."/>
            <person name="Shinozaki K."/>
        </authorList>
    </citation>
    <scope>NUCLEOTIDE SEQUENCE [LARGE SCALE MRNA]</scope>
    <source>
        <strain>cv. Columbia</strain>
    </source>
</reference>
<reference key="5">
    <citation type="journal article" date="2006" name="BMC Evol. Biol.">
        <title>The monosaccharide transporter gene family in land plants is ancient and shows differential subfamily expression and expansion across lineages.</title>
        <authorList>
            <person name="Johnson D.A."/>
            <person name="Hill J.P."/>
            <person name="Thomas M.A."/>
        </authorList>
    </citation>
    <scope>GENE FAMILY</scope>
</reference>
<reference key="6">
    <citation type="journal article" date="2009" name="J. Proteomics">
        <title>Phosphoproteomic analysis of nuclei-enriched fractions from Arabidopsis thaliana.</title>
        <authorList>
            <person name="Jones A.M.E."/>
            <person name="MacLean D."/>
            <person name="Studholme D.J."/>
            <person name="Serna-Sanz A."/>
            <person name="Andreasson E."/>
            <person name="Rathjen J.P."/>
            <person name="Peck S.C."/>
        </authorList>
    </citation>
    <scope>PHOSPHORYLATION [LARGE SCALE ANALYSIS] AT SER-26</scope>
    <scope>IDENTIFICATION BY MASS SPECTROMETRY [LARGE SCALE ANALYSIS]</scope>
    <source>
        <strain>cv. Columbia</strain>
    </source>
</reference>
<reference key="7">
    <citation type="journal article" date="2012" name="Mol. Cell. Proteomics">
        <title>Comparative large-scale characterisation of plant vs. mammal proteins reveals similar and idiosyncratic N-alpha acetylation features.</title>
        <authorList>
            <person name="Bienvenut W.V."/>
            <person name="Sumpton D."/>
            <person name="Martinez A."/>
            <person name="Lilla S."/>
            <person name="Espagne C."/>
            <person name="Meinnel T."/>
            <person name="Giglione C."/>
        </authorList>
    </citation>
    <scope>ACETYLATION [LARGE SCALE ANALYSIS] AT ALA-2</scope>
    <scope>CLEAVAGE OF INITIATOR METHIONINE [LARGE SCALE ANALYSIS]</scope>
    <scope>IDENTIFICATION BY MASS SPECTROMETRY [LARGE SCALE ANALYSIS]</scope>
</reference>
<name>XYLL2_ARATH</name>